<proteinExistence type="evidence at transcript level"/>
<protein>
    <recommendedName>
        <fullName evidence="3">Auxin-responsive protein SAUR77</fullName>
    </recommendedName>
    <alternativeName>
        <fullName evidence="2">Protein SMALL AUXIN UP RNA 77</fullName>
    </alternativeName>
</protein>
<dbReference type="EMBL" id="AC007843">
    <property type="protein sequence ID" value="AAF97310.1"/>
    <property type="molecule type" value="Genomic_DNA"/>
</dbReference>
<dbReference type="EMBL" id="CP002684">
    <property type="protein sequence ID" value="AEE29575.1"/>
    <property type="molecule type" value="Genomic_DNA"/>
</dbReference>
<dbReference type="EMBL" id="AK118889">
    <property type="protein sequence ID" value="BAC43474.1"/>
    <property type="molecule type" value="mRNA"/>
</dbReference>
<dbReference type="EMBL" id="BT026097">
    <property type="protein sequence ID" value="ABG48453.1"/>
    <property type="molecule type" value="mRNA"/>
</dbReference>
<dbReference type="PIR" id="A86310">
    <property type="entry name" value="A86310"/>
</dbReference>
<dbReference type="RefSeq" id="NP_849679.1">
    <property type="nucleotide sequence ID" value="NM_179348.2"/>
</dbReference>
<dbReference type="SMR" id="Q9LQI6"/>
<dbReference type="STRING" id="3702.Q9LQI6"/>
<dbReference type="PaxDb" id="3702-AT1G17345.1"/>
<dbReference type="EnsemblPlants" id="AT1G17345.1">
    <property type="protein sequence ID" value="AT1G17345.1"/>
    <property type="gene ID" value="AT1G17345"/>
</dbReference>
<dbReference type="GeneID" id="838306"/>
<dbReference type="Gramene" id="AT1G17345.1">
    <property type="protein sequence ID" value="AT1G17345.1"/>
    <property type="gene ID" value="AT1G17345"/>
</dbReference>
<dbReference type="KEGG" id="ath:AT1G17345"/>
<dbReference type="Araport" id="AT1G17345"/>
<dbReference type="TAIR" id="AT1G17345">
    <property type="gene designation" value="SAUR77"/>
</dbReference>
<dbReference type="eggNOG" id="ENOG502S116">
    <property type="taxonomic scope" value="Eukaryota"/>
</dbReference>
<dbReference type="HOGENOM" id="CLU_098106_6_2_1"/>
<dbReference type="InParanoid" id="Q9LQI6"/>
<dbReference type="OMA" id="LWMLKNS"/>
<dbReference type="PhylomeDB" id="Q9LQI6"/>
<dbReference type="PRO" id="PR:Q9LQI6"/>
<dbReference type="Proteomes" id="UP000006548">
    <property type="component" value="Chromosome 1"/>
</dbReference>
<dbReference type="ExpressionAtlas" id="Q9LQI6">
    <property type="expression patterns" value="baseline and differential"/>
</dbReference>
<dbReference type="GO" id="GO:0009873">
    <property type="term" value="P:ethylene-activated signaling pathway"/>
    <property type="evidence" value="ECO:0007669"/>
    <property type="project" value="UniProtKB-KW"/>
</dbReference>
<dbReference type="GO" id="GO:0009733">
    <property type="term" value="P:response to auxin"/>
    <property type="evidence" value="ECO:0007669"/>
    <property type="project" value="InterPro"/>
</dbReference>
<dbReference type="InterPro" id="IPR003676">
    <property type="entry name" value="SAUR_fam"/>
</dbReference>
<dbReference type="PANTHER" id="PTHR35296">
    <property type="entry name" value="EXPRESSED PROTEIN"/>
    <property type="match status" value="1"/>
</dbReference>
<dbReference type="PANTHER" id="PTHR35296:SF8">
    <property type="entry name" value="SMALL AUXIN-UP RNA-RELATED"/>
    <property type="match status" value="1"/>
</dbReference>
<dbReference type="Pfam" id="PF02519">
    <property type="entry name" value="Auxin_inducible"/>
    <property type="match status" value="1"/>
</dbReference>
<evidence type="ECO:0000269" key="1">
    <source>
    </source>
</evidence>
<evidence type="ECO:0000303" key="2">
    <source>
    </source>
</evidence>
<evidence type="ECO:0000305" key="3"/>
<evidence type="ECO:0000305" key="4">
    <source>
    </source>
</evidence>
<evidence type="ECO:0000305" key="5">
    <source>
    </source>
</evidence>
<evidence type="ECO:0000312" key="6">
    <source>
        <dbReference type="Araport" id="AT1G17345"/>
    </source>
</evidence>
<evidence type="ECO:0000312" key="7">
    <source>
        <dbReference type="EMBL" id="AAF97310.1"/>
    </source>
</evidence>
<organism>
    <name type="scientific">Arabidopsis thaliana</name>
    <name type="common">Mouse-ear cress</name>
    <dbReference type="NCBI Taxonomy" id="3702"/>
    <lineage>
        <taxon>Eukaryota</taxon>
        <taxon>Viridiplantae</taxon>
        <taxon>Streptophyta</taxon>
        <taxon>Embryophyta</taxon>
        <taxon>Tracheophyta</taxon>
        <taxon>Spermatophyta</taxon>
        <taxon>Magnoliopsida</taxon>
        <taxon>eudicotyledons</taxon>
        <taxon>Gunneridae</taxon>
        <taxon>Pentapetalae</taxon>
        <taxon>rosids</taxon>
        <taxon>malvids</taxon>
        <taxon>Brassicales</taxon>
        <taxon>Brassicaceae</taxon>
        <taxon>Camelineae</taxon>
        <taxon>Arabidopsis</taxon>
    </lineage>
</organism>
<sequence>MAIFGKLTKLKSAIKKWPSLTKNHHSTMCTASTAVSEVSKCEDLHVVYVGKSRRPYMLSSHVIAHPLFQELLDRSSRFIEERHDQETVLVACEVVLFEHLLWMLKNSSSDHGDEDDRERGSVEELAEFYTY</sequence>
<name>SAU77_ARATH</name>
<keyword id="KW-0217">Developmental protein</keyword>
<keyword id="KW-0936">Ethylene signaling pathway</keyword>
<keyword id="KW-0341">Growth regulation</keyword>
<keyword id="KW-1185">Reference proteome</keyword>
<comment type="function">
    <text evidence="4">May be involved in the regulation of ethylene receptor signaling. Promotes cell expansion and plant growth.</text>
</comment>
<comment type="miscellaneous">
    <text evidence="1">Plants silencing SAUR77 exhibit increased sensitivity to ethylene, while plants over-expressing SAUR77 display reduced ethylene sensitivity. Plants over-expressing SAUR77 exhibit increased rosette diameters.</text>
</comment>
<comment type="similarity">
    <text evidence="3">Belongs to the ARG7 family.</text>
</comment>
<comment type="caution">
    <text evidence="5">The article by Li et al was retracted by the editors after publication. Concerns were raised regarding a number of figure panels, such as partial overlap between the panels and duplication of protein gel analysis.</text>
</comment>
<accession>Q9LQI6</accession>
<gene>
    <name evidence="2" type="primary">SAUR77</name>
    <name evidence="6" type="ordered locus">At1g17345</name>
    <name evidence="7" type="ORF">F28G4.20</name>
</gene>
<reference key="1">
    <citation type="journal article" date="2000" name="Nature">
        <title>Sequence and analysis of chromosome 1 of the plant Arabidopsis thaliana.</title>
        <authorList>
            <person name="Theologis A."/>
            <person name="Ecker J.R."/>
            <person name="Palm C.J."/>
            <person name="Federspiel N.A."/>
            <person name="Kaul S."/>
            <person name="White O."/>
            <person name="Alonso J."/>
            <person name="Altafi H."/>
            <person name="Araujo R."/>
            <person name="Bowman C.L."/>
            <person name="Brooks S.Y."/>
            <person name="Buehler E."/>
            <person name="Chan A."/>
            <person name="Chao Q."/>
            <person name="Chen H."/>
            <person name="Cheuk R.F."/>
            <person name="Chin C.W."/>
            <person name="Chung M.K."/>
            <person name="Conn L."/>
            <person name="Conway A.B."/>
            <person name="Conway A.R."/>
            <person name="Creasy T.H."/>
            <person name="Dewar K."/>
            <person name="Dunn P."/>
            <person name="Etgu P."/>
            <person name="Feldblyum T.V."/>
            <person name="Feng J.-D."/>
            <person name="Fong B."/>
            <person name="Fujii C.Y."/>
            <person name="Gill J.E."/>
            <person name="Goldsmith A.D."/>
            <person name="Haas B."/>
            <person name="Hansen N.F."/>
            <person name="Hughes B."/>
            <person name="Huizar L."/>
            <person name="Hunter J.L."/>
            <person name="Jenkins J."/>
            <person name="Johnson-Hopson C."/>
            <person name="Khan S."/>
            <person name="Khaykin E."/>
            <person name="Kim C.J."/>
            <person name="Koo H.L."/>
            <person name="Kremenetskaia I."/>
            <person name="Kurtz D.B."/>
            <person name="Kwan A."/>
            <person name="Lam B."/>
            <person name="Langin-Hooper S."/>
            <person name="Lee A."/>
            <person name="Lee J.M."/>
            <person name="Lenz C.A."/>
            <person name="Li J.H."/>
            <person name="Li Y.-P."/>
            <person name="Lin X."/>
            <person name="Liu S.X."/>
            <person name="Liu Z.A."/>
            <person name="Luros J.S."/>
            <person name="Maiti R."/>
            <person name="Marziali A."/>
            <person name="Militscher J."/>
            <person name="Miranda M."/>
            <person name="Nguyen M."/>
            <person name="Nierman W.C."/>
            <person name="Osborne B.I."/>
            <person name="Pai G."/>
            <person name="Peterson J."/>
            <person name="Pham P.K."/>
            <person name="Rizzo M."/>
            <person name="Rooney T."/>
            <person name="Rowley D."/>
            <person name="Sakano H."/>
            <person name="Salzberg S.L."/>
            <person name="Schwartz J.R."/>
            <person name="Shinn P."/>
            <person name="Southwick A.M."/>
            <person name="Sun H."/>
            <person name="Tallon L.J."/>
            <person name="Tambunga G."/>
            <person name="Toriumi M.J."/>
            <person name="Town C.D."/>
            <person name="Utterback T."/>
            <person name="Van Aken S."/>
            <person name="Vaysberg M."/>
            <person name="Vysotskaia V.S."/>
            <person name="Walker M."/>
            <person name="Wu D."/>
            <person name="Yu G."/>
            <person name="Fraser C.M."/>
            <person name="Venter J.C."/>
            <person name="Davis R.W."/>
        </authorList>
    </citation>
    <scope>NUCLEOTIDE SEQUENCE [LARGE SCALE GENOMIC DNA]</scope>
    <source>
        <strain>cv. Columbia</strain>
    </source>
</reference>
<reference key="2">
    <citation type="journal article" date="2017" name="Plant J.">
        <title>Araport11: a complete reannotation of the Arabidopsis thaliana reference genome.</title>
        <authorList>
            <person name="Cheng C.Y."/>
            <person name="Krishnakumar V."/>
            <person name="Chan A.P."/>
            <person name="Thibaud-Nissen F."/>
            <person name="Schobel S."/>
            <person name="Town C.D."/>
        </authorList>
    </citation>
    <scope>GENOME REANNOTATION</scope>
    <source>
        <strain>cv. Columbia</strain>
    </source>
</reference>
<reference key="3">
    <citation type="journal article" date="2002" name="Science">
        <title>Functional annotation of a full-length Arabidopsis cDNA collection.</title>
        <authorList>
            <person name="Seki M."/>
            <person name="Narusaka M."/>
            <person name="Kamiya A."/>
            <person name="Ishida J."/>
            <person name="Satou M."/>
            <person name="Sakurai T."/>
            <person name="Nakajima M."/>
            <person name="Enju A."/>
            <person name="Akiyama K."/>
            <person name="Oono Y."/>
            <person name="Muramatsu M."/>
            <person name="Hayashizaki Y."/>
            <person name="Kawai J."/>
            <person name="Carninci P."/>
            <person name="Itoh M."/>
            <person name="Ishii Y."/>
            <person name="Arakawa T."/>
            <person name="Shibata K."/>
            <person name="Shinagawa A."/>
            <person name="Shinozaki K."/>
        </authorList>
    </citation>
    <scope>NUCLEOTIDE SEQUENCE [LARGE SCALE MRNA]</scope>
    <source>
        <strain>cv. Columbia</strain>
    </source>
</reference>
<reference key="4">
    <citation type="submission" date="2006-07" db="EMBL/GenBank/DDBJ databases">
        <title>Arabidopsis ORF clones.</title>
        <authorList>
            <person name="Quinitio C."/>
            <person name="Chen H."/>
            <person name="Kim C.J."/>
            <person name="Shinn P."/>
            <person name="Ecker J.R."/>
        </authorList>
    </citation>
    <scope>NUCLEOTIDE SEQUENCE [LARGE SCALE MRNA]</scope>
    <source>
        <strain>cv. Columbia</strain>
    </source>
</reference>
<reference key="5">
    <citation type="journal article" date="2015" name="Sci. Rep.">
        <title>Three SAUR proteins SAUR76, SAUR77 and SAUR78 promote plant growth in Arabidopsis.</title>
        <authorList>
            <person name="Li Z.G."/>
            <person name="Chen H.W."/>
            <person name="Li Q.T."/>
            <person name="Tao J.J."/>
            <person name="Bian X.H."/>
            <person name="Ma B."/>
            <person name="Zhang W.K."/>
            <person name="Chen S.Y."/>
            <person name="Zhang J.S."/>
        </authorList>
    </citation>
    <scope>FUNCTION</scope>
    <scope>RETRACTED PAPER</scope>
</reference>
<reference key="6">
    <citation type="journal article" date="2022" name="Sci. Rep.">
        <authorList>
            <person name="Li Z.G."/>
            <person name="Chen H.W."/>
            <person name="Li Q.T."/>
            <person name="Tao J.J."/>
            <person name="Bian X.H."/>
            <person name="Ma B."/>
            <person name="Zhang W.K."/>
            <person name="Chen S.Y."/>
            <person name="Zhang J.S."/>
        </authorList>
    </citation>
    <scope>RETRACTION NOTICE OF PUBMED:26207341</scope>
</reference>
<feature type="chain" id="PRO_0000444008" description="Auxin-responsive protein SAUR77">
    <location>
        <begin position="1"/>
        <end position="131"/>
    </location>
</feature>